<reference key="1">
    <citation type="journal article" date="2008" name="PLoS Genet.">
        <title>Complete genome sequence of the N2-fixing broad host range endophyte Klebsiella pneumoniae 342 and virulence predictions verified in mice.</title>
        <authorList>
            <person name="Fouts D.E."/>
            <person name="Tyler H.L."/>
            <person name="DeBoy R.T."/>
            <person name="Daugherty S."/>
            <person name="Ren Q."/>
            <person name="Badger J.H."/>
            <person name="Durkin A.S."/>
            <person name="Huot H."/>
            <person name="Shrivastava S."/>
            <person name="Kothari S."/>
            <person name="Dodson R.J."/>
            <person name="Mohamoud Y."/>
            <person name="Khouri H."/>
            <person name="Roesch L.F.W."/>
            <person name="Krogfelt K.A."/>
            <person name="Struve C."/>
            <person name="Triplett E.W."/>
            <person name="Methe B.A."/>
        </authorList>
    </citation>
    <scope>NUCLEOTIDE SEQUENCE [LARGE SCALE GENOMIC DNA]</scope>
    <source>
        <strain>342</strain>
    </source>
</reference>
<evidence type="ECO:0000255" key="1">
    <source>
        <dbReference type="HAMAP-Rule" id="MF_00107"/>
    </source>
</evidence>
<feature type="chain" id="PRO_1000094268" description="2-C-methyl-D-erythritol 2,4-cyclodiphosphate synthase">
    <location>
        <begin position="1"/>
        <end position="159"/>
    </location>
</feature>
<feature type="binding site" evidence="1">
    <location>
        <begin position="8"/>
        <end position="10"/>
    </location>
    <ligand>
        <name>4-CDP-2-C-methyl-D-erythritol 2-phosphate</name>
        <dbReference type="ChEBI" id="CHEBI:57919"/>
    </ligand>
</feature>
<feature type="binding site" evidence="1">
    <location>
        <position position="8"/>
    </location>
    <ligand>
        <name>a divalent metal cation</name>
        <dbReference type="ChEBI" id="CHEBI:60240"/>
    </ligand>
</feature>
<feature type="binding site" evidence="1">
    <location>
        <position position="10"/>
    </location>
    <ligand>
        <name>a divalent metal cation</name>
        <dbReference type="ChEBI" id="CHEBI:60240"/>
    </ligand>
</feature>
<feature type="binding site" evidence="1">
    <location>
        <begin position="34"/>
        <end position="35"/>
    </location>
    <ligand>
        <name>4-CDP-2-C-methyl-D-erythritol 2-phosphate</name>
        <dbReference type="ChEBI" id="CHEBI:57919"/>
    </ligand>
</feature>
<feature type="binding site" evidence="1">
    <location>
        <position position="42"/>
    </location>
    <ligand>
        <name>a divalent metal cation</name>
        <dbReference type="ChEBI" id="CHEBI:60240"/>
    </ligand>
</feature>
<feature type="binding site" evidence="1">
    <location>
        <begin position="56"/>
        <end position="58"/>
    </location>
    <ligand>
        <name>4-CDP-2-C-methyl-D-erythritol 2-phosphate</name>
        <dbReference type="ChEBI" id="CHEBI:57919"/>
    </ligand>
</feature>
<feature type="binding site" evidence="1">
    <location>
        <begin position="61"/>
        <end position="65"/>
    </location>
    <ligand>
        <name>4-CDP-2-C-methyl-D-erythritol 2-phosphate</name>
        <dbReference type="ChEBI" id="CHEBI:57919"/>
    </ligand>
</feature>
<feature type="binding site" evidence="1">
    <location>
        <begin position="100"/>
        <end position="106"/>
    </location>
    <ligand>
        <name>4-CDP-2-C-methyl-D-erythritol 2-phosphate</name>
        <dbReference type="ChEBI" id="CHEBI:57919"/>
    </ligand>
</feature>
<feature type="binding site" evidence="1">
    <location>
        <begin position="132"/>
        <end position="135"/>
    </location>
    <ligand>
        <name>4-CDP-2-C-methyl-D-erythritol 2-phosphate</name>
        <dbReference type="ChEBI" id="CHEBI:57919"/>
    </ligand>
</feature>
<feature type="binding site" evidence="1">
    <location>
        <position position="139"/>
    </location>
    <ligand>
        <name>4-CDP-2-C-methyl-D-erythritol 2-phosphate</name>
        <dbReference type="ChEBI" id="CHEBI:57919"/>
    </ligand>
</feature>
<feature type="binding site" evidence="1">
    <location>
        <position position="142"/>
    </location>
    <ligand>
        <name>4-CDP-2-C-methyl-D-erythritol 2-phosphate</name>
        <dbReference type="ChEBI" id="CHEBI:57919"/>
    </ligand>
</feature>
<feature type="site" description="Transition state stabilizer" evidence="1">
    <location>
        <position position="34"/>
    </location>
</feature>
<feature type="site" description="Transition state stabilizer" evidence="1">
    <location>
        <position position="133"/>
    </location>
</feature>
<name>ISPF_KLEP3</name>
<proteinExistence type="inferred from homology"/>
<gene>
    <name evidence="1" type="primary">ispF</name>
    <name type="ordered locus">KPK_1015</name>
</gene>
<sequence length="159" mass="16969">MRIGHGFDVHAFGGEGPIIIGGVRIPYEKGLLAHSDGDVALHALTDALLGAAALGDIGKLFPDTDPAFKGADSRELLREAWRRIQAKGYTLGNVDVTIIAQAPKMLPHIPQMRVFIAEDLGCHMDDVNVKATTTEKLGFTGRGEGIACEAVALLRKAEK</sequence>
<keyword id="KW-0414">Isoprene biosynthesis</keyword>
<keyword id="KW-0456">Lyase</keyword>
<keyword id="KW-0479">Metal-binding</keyword>
<dbReference type="EC" id="4.6.1.12" evidence="1"/>
<dbReference type="EMBL" id="CP000964">
    <property type="protein sequence ID" value="ACI07049.1"/>
    <property type="molecule type" value="Genomic_DNA"/>
</dbReference>
<dbReference type="SMR" id="B5XV35"/>
<dbReference type="KEGG" id="kpe:KPK_1015"/>
<dbReference type="HOGENOM" id="CLU_084630_2_0_6"/>
<dbReference type="UniPathway" id="UPA00056">
    <property type="reaction ID" value="UER00095"/>
</dbReference>
<dbReference type="Proteomes" id="UP000001734">
    <property type="component" value="Chromosome"/>
</dbReference>
<dbReference type="GO" id="GO:0008685">
    <property type="term" value="F:2-C-methyl-D-erythritol 2,4-cyclodiphosphate synthase activity"/>
    <property type="evidence" value="ECO:0007669"/>
    <property type="project" value="UniProtKB-UniRule"/>
</dbReference>
<dbReference type="GO" id="GO:0046872">
    <property type="term" value="F:metal ion binding"/>
    <property type="evidence" value="ECO:0007669"/>
    <property type="project" value="UniProtKB-KW"/>
</dbReference>
<dbReference type="GO" id="GO:0019288">
    <property type="term" value="P:isopentenyl diphosphate biosynthetic process, methylerythritol 4-phosphate pathway"/>
    <property type="evidence" value="ECO:0007669"/>
    <property type="project" value="UniProtKB-UniRule"/>
</dbReference>
<dbReference type="GO" id="GO:0016114">
    <property type="term" value="P:terpenoid biosynthetic process"/>
    <property type="evidence" value="ECO:0007669"/>
    <property type="project" value="InterPro"/>
</dbReference>
<dbReference type="CDD" id="cd00554">
    <property type="entry name" value="MECDP_synthase"/>
    <property type="match status" value="1"/>
</dbReference>
<dbReference type="FunFam" id="3.30.1330.50:FF:000001">
    <property type="entry name" value="2-C-methyl-D-erythritol 2,4-cyclodiphosphate synthase"/>
    <property type="match status" value="1"/>
</dbReference>
<dbReference type="Gene3D" id="3.30.1330.50">
    <property type="entry name" value="2-C-methyl-D-erythritol 2,4-cyclodiphosphate synthase"/>
    <property type="match status" value="1"/>
</dbReference>
<dbReference type="HAMAP" id="MF_00107">
    <property type="entry name" value="IspF"/>
    <property type="match status" value="1"/>
</dbReference>
<dbReference type="InterPro" id="IPR003526">
    <property type="entry name" value="MECDP_synthase"/>
</dbReference>
<dbReference type="InterPro" id="IPR020555">
    <property type="entry name" value="MECDP_synthase_CS"/>
</dbReference>
<dbReference type="InterPro" id="IPR036571">
    <property type="entry name" value="MECDP_synthase_sf"/>
</dbReference>
<dbReference type="NCBIfam" id="TIGR00151">
    <property type="entry name" value="ispF"/>
    <property type="match status" value="1"/>
</dbReference>
<dbReference type="PANTHER" id="PTHR43181">
    <property type="entry name" value="2-C-METHYL-D-ERYTHRITOL 2,4-CYCLODIPHOSPHATE SYNTHASE, CHLOROPLASTIC"/>
    <property type="match status" value="1"/>
</dbReference>
<dbReference type="PANTHER" id="PTHR43181:SF1">
    <property type="entry name" value="2-C-METHYL-D-ERYTHRITOL 2,4-CYCLODIPHOSPHATE SYNTHASE, CHLOROPLASTIC"/>
    <property type="match status" value="1"/>
</dbReference>
<dbReference type="Pfam" id="PF02542">
    <property type="entry name" value="YgbB"/>
    <property type="match status" value="1"/>
</dbReference>
<dbReference type="SUPFAM" id="SSF69765">
    <property type="entry name" value="IpsF-like"/>
    <property type="match status" value="1"/>
</dbReference>
<dbReference type="PROSITE" id="PS01350">
    <property type="entry name" value="ISPF"/>
    <property type="match status" value="1"/>
</dbReference>
<organism>
    <name type="scientific">Klebsiella pneumoniae (strain 342)</name>
    <dbReference type="NCBI Taxonomy" id="507522"/>
    <lineage>
        <taxon>Bacteria</taxon>
        <taxon>Pseudomonadati</taxon>
        <taxon>Pseudomonadota</taxon>
        <taxon>Gammaproteobacteria</taxon>
        <taxon>Enterobacterales</taxon>
        <taxon>Enterobacteriaceae</taxon>
        <taxon>Klebsiella/Raoultella group</taxon>
        <taxon>Klebsiella</taxon>
        <taxon>Klebsiella pneumoniae complex</taxon>
    </lineage>
</organism>
<accession>B5XV35</accession>
<protein>
    <recommendedName>
        <fullName evidence="1">2-C-methyl-D-erythritol 2,4-cyclodiphosphate synthase</fullName>
        <shortName evidence="1">MECDP-synthase</shortName>
        <shortName evidence="1">MECPP-synthase</shortName>
        <shortName evidence="1">MECPS</shortName>
        <ecNumber evidence="1">4.6.1.12</ecNumber>
    </recommendedName>
</protein>
<comment type="function">
    <text evidence="1">Involved in the biosynthesis of isopentenyl diphosphate (IPP) and dimethylallyl diphosphate (DMAPP), two major building blocks of isoprenoid compounds. Catalyzes the conversion of 4-diphosphocytidyl-2-C-methyl-D-erythritol 2-phosphate (CDP-ME2P) to 2-C-methyl-D-erythritol 2,4-cyclodiphosphate (ME-CPP) with a corresponding release of cytidine 5-monophosphate (CMP).</text>
</comment>
<comment type="catalytic activity">
    <reaction evidence="1">
        <text>4-CDP-2-C-methyl-D-erythritol 2-phosphate = 2-C-methyl-D-erythritol 2,4-cyclic diphosphate + CMP</text>
        <dbReference type="Rhea" id="RHEA:23864"/>
        <dbReference type="ChEBI" id="CHEBI:57919"/>
        <dbReference type="ChEBI" id="CHEBI:58483"/>
        <dbReference type="ChEBI" id="CHEBI:60377"/>
        <dbReference type="EC" id="4.6.1.12"/>
    </reaction>
</comment>
<comment type="cofactor">
    <cofactor evidence="1">
        <name>a divalent metal cation</name>
        <dbReference type="ChEBI" id="CHEBI:60240"/>
    </cofactor>
    <text evidence="1">Binds 1 divalent metal cation per subunit.</text>
</comment>
<comment type="pathway">
    <text evidence="1">Isoprenoid biosynthesis; isopentenyl diphosphate biosynthesis via DXP pathway; isopentenyl diphosphate from 1-deoxy-D-xylulose 5-phosphate: step 4/6.</text>
</comment>
<comment type="subunit">
    <text evidence="1">Homotrimer.</text>
</comment>
<comment type="similarity">
    <text evidence="1">Belongs to the IspF family.</text>
</comment>